<keyword id="KW-0165">Cleavage on pair of basic residues</keyword>
<keyword id="KW-1015">Disulfide bond</keyword>
<keyword id="KW-0960">Knottin</keyword>
<keyword id="KW-0430">Lectin</keyword>
<keyword id="KW-0964">Secreted</keyword>
<keyword id="KW-0732">Signal</keyword>
<keyword id="KW-0800">Toxin</keyword>
<organism>
    <name type="scientific">Cyriopagopus schmidti</name>
    <name type="common">Chinese bird spider</name>
    <name type="synonym">Haplopelma schmidti</name>
    <dbReference type="NCBI Taxonomy" id="29017"/>
    <lineage>
        <taxon>Eukaryota</taxon>
        <taxon>Metazoa</taxon>
        <taxon>Ecdysozoa</taxon>
        <taxon>Arthropoda</taxon>
        <taxon>Chelicerata</taxon>
        <taxon>Arachnida</taxon>
        <taxon>Araneae</taxon>
        <taxon>Mygalomorphae</taxon>
        <taxon>Theraphosidae</taxon>
        <taxon>Cyriopagopus</taxon>
    </lineage>
</organism>
<accession>B3FIS3</accession>
<dbReference type="EMBL" id="EU195267">
    <property type="protein sequence ID" value="ABY77720.1"/>
    <property type="molecule type" value="mRNA"/>
</dbReference>
<dbReference type="BMRB" id="B3FIS3"/>
<dbReference type="ArachnoServer" id="AS000355">
    <property type="toxin name" value="U5-theraphotoxin-Hs1a"/>
</dbReference>
<dbReference type="GO" id="GO:0005576">
    <property type="term" value="C:extracellular region"/>
    <property type="evidence" value="ECO:0007669"/>
    <property type="project" value="UniProtKB-SubCell"/>
</dbReference>
<dbReference type="GO" id="GO:0030246">
    <property type="term" value="F:carbohydrate binding"/>
    <property type="evidence" value="ECO:0007669"/>
    <property type="project" value="UniProtKB-KW"/>
</dbReference>
<dbReference type="GO" id="GO:0008200">
    <property type="term" value="F:ion channel inhibitor activity"/>
    <property type="evidence" value="ECO:0007669"/>
    <property type="project" value="InterPro"/>
</dbReference>
<dbReference type="GO" id="GO:0090729">
    <property type="term" value="F:toxin activity"/>
    <property type="evidence" value="ECO:0007669"/>
    <property type="project" value="UniProtKB-KW"/>
</dbReference>
<dbReference type="InterPro" id="IPR011696">
    <property type="entry name" value="Huwentoxin-1"/>
</dbReference>
<dbReference type="InterPro" id="IPR013140">
    <property type="entry name" value="Huwentoxin_CS1"/>
</dbReference>
<dbReference type="Pfam" id="PF07740">
    <property type="entry name" value="Toxin_12"/>
    <property type="match status" value="1"/>
</dbReference>
<dbReference type="SUPFAM" id="SSF57059">
    <property type="entry name" value="omega toxin-like"/>
    <property type="match status" value="1"/>
</dbReference>
<dbReference type="PROSITE" id="PS60021">
    <property type="entry name" value="HWTX_1"/>
    <property type="match status" value="1"/>
</dbReference>
<proteinExistence type="evidence at transcript level"/>
<protein>
    <recommendedName>
        <fullName>U5-theraphotoxin-Hs1a 4</fullName>
        <shortName>U5-TRTX-Hs1a</shortName>
    </recommendedName>
    <alternativeName>
        <fullName>Lectin SHL-Ia4</fullName>
    </alternativeName>
</protein>
<comment type="function">
    <text evidence="3">Agglutinates erythrocytes.</text>
</comment>
<comment type="subcellular location">
    <subcellularLocation>
        <location evidence="1">Secreted</location>
    </subcellularLocation>
</comment>
<comment type="tissue specificity">
    <text>Expressed by the venom gland.</text>
</comment>
<comment type="domain">
    <text>The presence of a 'disulfide through disulfide knot' structurally defines this protein as a knottin.</text>
</comment>
<comment type="similarity">
    <text evidence="5">Belongs to the neurotoxin 10 (Hwtx-1) family. 51 (Hntx-8) subfamily. Hntx-8 sub-subfamily.</text>
</comment>
<feature type="signal peptide" evidence="4">
    <location>
        <begin position="1"/>
        <end position="21"/>
    </location>
</feature>
<feature type="propeptide" id="PRO_0000380168" evidence="1">
    <location>
        <begin position="22"/>
        <end position="49"/>
    </location>
</feature>
<feature type="chain" id="PRO_0000380169" description="U5-theraphotoxin-Hs1a 4">
    <location>
        <begin position="50"/>
        <end position="81"/>
    </location>
</feature>
<feature type="disulfide bond" evidence="2">
    <location>
        <begin position="51"/>
        <end position="63"/>
    </location>
</feature>
<feature type="disulfide bond" evidence="2">
    <location>
        <begin position="56"/>
        <end position="68"/>
    </location>
</feature>
<feature type="disulfide bond" evidence="2">
    <location>
        <begin position="62"/>
        <end position="75"/>
    </location>
</feature>
<reference key="1">
    <citation type="journal article" date="2008" name="Toxicon">
        <title>Molecular diversification based on analysis of expressed sequence tags from the venom glands of the Chinese bird spider Ornithoctonus huwena.</title>
        <authorList>
            <person name="Jiang L."/>
            <person name="Peng L."/>
            <person name="Chen J."/>
            <person name="Zhang Y."/>
            <person name="Xiong X."/>
            <person name="Liang S."/>
        </authorList>
    </citation>
    <scope>NUCLEOTIDE SEQUENCE [MRNA]</scope>
    <source>
        <tissue>Venom gland</tissue>
    </source>
</reference>
<name>TXLA4_CYRSC</name>
<sequence length="83" mass="9437">MKTSMFLTLTGLVLLFVDCYASESEEKEFPKELLSSIFAADSDFKVEERGCLGDKCDYNNGCCSGYVCSRTWKWCVLAGPWRR</sequence>
<evidence type="ECO:0000250" key="1"/>
<evidence type="ECO:0000250" key="2">
    <source>
        <dbReference type="UniProtKB" id="B3FIS6"/>
    </source>
</evidence>
<evidence type="ECO:0000250" key="3">
    <source>
        <dbReference type="UniProtKB" id="Q86C51"/>
    </source>
</evidence>
<evidence type="ECO:0000255" key="4"/>
<evidence type="ECO:0000305" key="5"/>